<feature type="chain" id="PRO_1000147571" description="Ribosomal RNA small subunit methyltransferase F">
    <location>
        <begin position="1"/>
        <end position="477"/>
    </location>
</feature>
<feature type="active site" description="Nucleophile" evidence="1">
    <location>
        <position position="247"/>
    </location>
</feature>
<feature type="binding site" evidence="1">
    <location>
        <begin position="125"/>
        <end position="131"/>
    </location>
    <ligand>
        <name>S-adenosyl-L-methionine</name>
        <dbReference type="ChEBI" id="CHEBI:59789"/>
    </ligand>
</feature>
<feature type="binding site" evidence="1">
    <location>
        <position position="149"/>
    </location>
    <ligand>
        <name>S-adenosyl-L-methionine</name>
        <dbReference type="ChEBI" id="CHEBI:59789"/>
    </ligand>
</feature>
<feature type="binding site" evidence="1">
    <location>
        <position position="176"/>
    </location>
    <ligand>
        <name>S-adenosyl-L-methionine</name>
        <dbReference type="ChEBI" id="CHEBI:59789"/>
    </ligand>
</feature>
<feature type="binding site" evidence="1">
    <location>
        <position position="194"/>
    </location>
    <ligand>
        <name>S-adenosyl-L-methionine</name>
        <dbReference type="ChEBI" id="CHEBI:59789"/>
    </ligand>
</feature>
<proteinExistence type="inferred from homology"/>
<evidence type="ECO:0000255" key="1">
    <source>
        <dbReference type="HAMAP-Rule" id="MF_01579"/>
    </source>
</evidence>
<comment type="function">
    <text evidence="1">Specifically methylates the cytosine at position 1407 (m5C1407) of 16S rRNA.</text>
</comment>
<comment type="catalytic activity">
    <reaction evidence="1">
        <text>cytidine(1407) in 16S rRNA + S-adenosyl-L-methionine = 5-methylcytidine(1407) in 16S rRNA + S-adenosyl-L-homocysteine + H(+)</text>
        <dbReference type="Rhea" id="RHEA:42756"/>
        <dbReference type="Rhea" id="RHEA-COMP:10223"/>
        <dbReference type="Rhea" id="RHEA-COMP:10224"/>
        <dbReference type="ChEBI" id="CHEBI:15378"/>
        <dbReference type="ChEBI" id="CHEBI:57856"/>
        <dbReference type="ChEBI" id="CHEBI:59789"/>
        <dbReference type="ChEBI" id="CHEBI:74483"/>
        <dbReference type="ChEBI" id="CHEBI:82748"/>
        <dbReference type="EC" id="2.1.1.178"/>
    </reaction>
</comment>
<comment type="subcellular location">
    <subcellularLocation>
        <location evidence="1">Cytoplasm</location>
    </subcellularLocation>
</comment>
<comment type="similarity">
    <text evidence="1">Belongs to the class I-like SAM-binding methyltransferase superfamily. RsmB/NOP family.</text>
</comment>
<protein>
    <recommendedName>
        <fullName evidence="1">Ribosomal RNA small subunit methyltransferase F</fullName>
        <ecNumber evidence="1">2.1.1.178</ecNumber>
    </recommendedName>
    <alternativeName>
        <fullName evidence="1">16S rRNA m5C1407 methyltransferase</fullName>
    </alternativeName>
    <alternativeName>
        <fullName evidence="1">rRNA (cytosine-C(5)-)-methyltransferase RsmF</fullName>
    </alternativeName>
</protein>
<accession>B5XQ35</accession>
<sequence>MAENTVYFPEAFLAQMRAAMPAHLSFDDFIAACQRPLRRSIRVNTLKISVADFLSLVAPYGWQLTPVPWCEEGFWIERDGDDALPLGSTAEHLSGLFYIQEASSMLPVAALFADNPQPERVMDVAAAPGSKTTQIAARMGNAGGILANEFSASRVKVLHANISRCGISNVALTHFDGRVFGAALPEAFDAILLDAPCSGEGVVRKDADALKNWSPESNLDIAATQRELIDSAFHALRPGGTLVYSTCTLNREENQSVVQWLLSRYPQAVEILPLGDLFSGAADALTAEGFLHVFPQIYDCEGFFVARLRKTAAIDPLPAPGYKVGKFPFTPLKSREAAAVTAAANAVGLAWDAGHTLWQRDKELWLFPQAMEPLFGQVRFSRIGVRLAEVHNKGYRWQHEAVIAFAAPQRAFELTQEEAEEWYRGRDVYPQTAPQQDEAIVTFQGVPLGLAKRVGSRLKNSYPRELVRDGKLFAGKV</sequence>
<gene>
    <name evidence="1" type="primary">rsmF</name>
    <name type="ordered locus">KPK_1939</name>
</gene>
<keyword id="KW-0963">Cytoplasm</keyword>
<keyword id="KW-0489">Methyltransferase</keyword>
<keyword id="KW-0694">RNA-binding</keyword>
<keyword id="KW-0698">rRNA processing</keyword>
<keyword id="KW-0949">S-adenosyl-L-methionine</keyword>
<keyword id="KW-0808">Transferase</keyword>
<organism>
    <name type="scientific">Klebsiella pneumoniae (strain 342)</name>
    <dbReference type="NCBI Taxonomy" id="507522"/>
    <lineage>
        <taxon>Bacteria</taxon>
        <taxon>Pseudomonadati</taxon>
        <taxon>Pseudomonadota</taxon>
        <taxon>Gammaproteobacteria</taxon>
        <taxon>Enterobacterales</taxon>
        <taxon>Enterobacteriaceae</taxon>
        <taxon>Klebsiella/Raoultella group</taxon>
        <taxon>Klebsiella</taxon>
        <taxon>Klebsiella pneumoniae complex</taxon>
    </lineage>
</organism>
<name>RSMF_KLEP3</name>
<dbReference type="EC" id="2.1.1.178" evidence="1"/>
<dbReference type="EMBL" id="CP000964">
    <property type="protein sequence ID" value="ACI10246.1"/>
    <property type="molecule type" value="Genomic_DNA"/>
</dbReference>
<dbReference type="SMR" id="B5XQ35"/>
<dbReference type="KEGG" id="kpe:KPK_1939"/>
<dbReference type="HOGENOM" id="CLU_005316_6_2_6"/>
<dbReference type="Proteomes" id="UP000001734">
    <property type="component" value="Chromosome"/>
</dbReference>
<dbReference type="GO" id="GO:0005737">
    <property type="term" value="C:cytoplasm"/>
    <property type="evidence" value="ECO:0007669"/>
    <property type="project" value="UniProtKB-SubCell"/>
</dbReference>
<dbReference type="GO" id="GO:0003723">
    <property type="term" value="F:RNA binding"/>
    <property type="evidence" value="ECO:0007669"/>
    <property type="project" value="UniProtKB-KW"/>
</dbReference>
<dbReference type="GO" id="GO:0009383">
    <property type="term" value="F:rRNA (cytosine-C5-)-methyltransferase activity"/>
    <property type="evidence" value="ECO:0007669"/>
    <property type="project" value="TreeGrafter"/>
</dbReference>
<dbReference type="GO" id="GO:0070475">
    <property type="term" value="P:rRNA base methylation"/>
    <property type="evidence" value="ECO:0007669"/>
    <property type="project" value="TreeGrafter"/>
</dbReference>
<dbReference type="CDD" id="cd02440">
    <property type="entry name" value="AdoMet_MTases"/>
    <property type="match status" value="1"/>
</dbReference>
<dbReference type="FunFam" id="3.10.450.720:FF:000001">
    <property type="entry name" value="Ribosomal RNA small subunit methyltransferase F"/>
    <property type="match status" value="1"/>
</dbReference>
<dbReference type="FunFam" id="3.40.50.150:FF:000079">
    <property type="entry name" value="Ribosomal RNA small subunit methyltransferase F"/>
    <property type="match status" value="1"/>
</dbReference>
<dbReference type="Gene3D" id="3.10.450.720">
    <property type="match status" value="1"/>
</dbReference>
<dbReference type="Gene3D" id="3.40.50.150">
    <property type="entry name" value="Vaccinia Virus protein VP39"/>
    <property type="match status" value="1"/>
</dbReference>
<dbReference type="HAMAP" id="MF_01579">
    <property type="entry name" value="16SrRNA_methyltr_F"/>
    <property type="match status" value="1"/>
</dbReference>
<dbReference type="InterPro" id="IPR031341">
    <property type="entry name" value="Methyltr_RsmF_N"/>
</dbReference>
<dbReference type="InterPro" id="IPR049560">
    <property type="entry name" value="MeTrfase_RsmB-F_NOP2_cat"/>
</dbReference>
<dbReference type="InterPro" id="IPR001678">
    <property type="entry name" value="MeTrfase_RsmB-F_NOP2_dom"/>
</dbReference>
<dbReference type="InterPro" id="IPR027391">
    <property type="entry name" value="Nol1_Nop2_Fmu_2"/>
</dbReference>
<dbReference type="InterPro" id="IPR011023">
    <property type="entry name" value="Nop2p"/>
</dbReference>
<dbReference type="InterPro" id="IPR023267">
    <property type="entry name" value="RCMT"/>
</dbReference>
<dbReference type="InterPro" id="IPR023545">
    <property type="entry name" value="rRNA_ssu_MeTfrase_F"/>
</dbReference>
<dbReference type="InterPro" id="IPR018314">
    <property type="entry name" value="RsmB/NOL1/NOP2-like_CS"/>
</dbReference>
<dbReference type="InterPro" id="IPR029063">
    <property type="entry name" value="SAM-dependent_MTases_sf"/>
</dbReference>
<dbReference type="InterPro" id="IPR048457">
    <property type="entry name" value="YebU_pre-PUA_dom"/>
</dbReference>
<dbReference type="NCBIfam" id="TIGR00446">
    <property type="entry name" value="nop2p"/>
    <property type="match status" value="1"/>
</dbReference>
<dbReference type="NCBIfam" id="NF008898">
    <property type="entry name" value="PRK11933.1"/>
    <property type="match status" value="1"/>
</dbReference>
<dbReference type="PANTHER" id="PTHR22807:SF30">
    <property type="entry name" value="28S RRNA (CYTOSINE(4447)-C(5))-METHYLTRANSFERASE-RELATED"/>
    <property type="match status" value="1"/>
</dbReference>
<dbReference type="PANTHER" id="PTHR22807">
    <property type="entry name" value="NOP2 YEAST -RELATED NOL1/NOP2/FMU SUN DOMAIN-CONTAINING"/>
    <property type="match status" value="1"/>
</dbReference>
<dbReference type="Pfam" id="PF01189">
    <property type="entry name" value="Methyltr_RsmB-F"/>
    <property type="match status" value="1"/>
</dbReference>
<dbReference type="Pfam" id="PF17125">
    <property type="entry name" value="Methyltr_RsmF_N"/>
    <property type="match status" value="1"/>
</dbReference>
<dbReference type="Pfam" id="PF13636">
    <property type="entry name" value="Methyltranf_PUA"/>
    <property type="match status" value="1"/>
</dbReference>
<dbReference type="Pfam" id="PF21150">
    <property type="entry name" value="YebU_pre-PUA_dom"/>
    <property type="match status" value="1"/>
</dbReference>
<dbReference type="PRINTS" id="PR02008">
    <property type="entry name" value="RCMTFAMILY"/>
</dbReference>
<dbReference type="SUPFAM" id="SSF53335">
    <property type="entry name" value="S-adenosyl-L-methionine-dependent methyltransferases"/>
    <property type="match status" value="1"/>
</dbReference>
<dbReference type="PROSITE" id="PS01153">
    <property type="entry name" value="NOL1_NOP2_SUN"/>
    <property type="match status" value="1"/>
</dbReference>
<dbReference type="PROSITE" id="PS51686">
    <property type="entry name" value="SAM_MT_RSMB_NOP"/>
    <property type="match status" value="1"/>
</dbReference>
<reference key="1">
    <citation type="journal article" date="2008" name="PLoS Genet.">
        <title>Complete genome sequence of the N2-fixing broad host range endophyte Klebsiella pneumoniae 342 and virulence predictions verified in mice.</title>
        <authorList>
            <person name="Fouts D.E."/>
            <person name="Tyler H.L."/>
            <person name="DeBoy R.T."/>
            <person name="Daugherty S."/>
            <person name="Ren Q."/>
            <person name="Badger J.H."/>
            <person name="Durkin A.S."/>
            <person name="Huot H."/>
            <person name="Shrivastava S."/>
            <person name="Kothari S."/>
            <person name="Dodson R.J."/>
            <person name="Mohamoud Y."/>
            <person name="Khouri H."/>
            <person name="Roesch L.F.W."/>
            <person name="Krogfelt K.A."/>
            <person name="Struve C."/>
            <person name="Triplett E.W."/>
            <person name="Methe B.A."/>
        </authorList>
    </citation>
    <scope>NUCLEOTIDE SEQUENCE [LARGE SCALE GENOMIC DNA]</scope>
    <source>
        <strain>342</strain>
    </source>
</reference>